<proteinExistence type="inferred from homology"/>
<dbReference type="EC" id="1.1.1.94" evidence="1"/>
<dbReference type="EMBL" id="AP008230">
    <property type="protein sequence ID" value="BAE84038.1"/>
    <property type="molecule type" value="Genomic_DNA"/>
</dbReference>
<dbReference type="RefSeq" id="WP_011460199.1">
    <property type="nucleotide sequence ID" value="NC_007907.1"/>
</dbReference>
<dbReference type="SMR" id="Q24VA4"/>
<dbReference type="STRING" id="138119.DSY2249"/>
<dbReference type="KEGG" id="dsy:DSY2249"/>
<dbReference type="eggNOG" id="COG0240">
    <property type="taxonomic scope" value="Bacteria"/>
</dbReference>
<dbReference type="HOGENOM" id="CLU_033449_0_2_9"/>
<dbReference type="UniPathway" id="UPA00940"/>
<dbReference type="Proteomes" id="UP000001946">
    <property type="component" value="Chromosome"/>
</dbReference>
<dbReference type="GO" id="GO:0005829">
    <property type="term" value="C:cytosol"/>
    <property type="evidence" value="ECO:0007669"/>
    <property type="project" value="TreeGrafter"/>
</dbReference>
<dbReference type="GO" id="GO:0047952">
    <property type="term" value="F:glycerol-3-phosphate dehydrogenase [NAD(P)+] activity"/>
    <property type="evidence" value="ECO:0007669"/>
    <property type="project" value="UniProtKB-UniRule"/>
</dbReference>
<dbReference type="GO" id="GO:0051287">
    <property type="term" value="F:NAD binding"/>
    <property type="evidence" value="ECO:0007669"/>
    <property type="project" value="InterPro"/>
</dbReference>
<dbReference type="GO" id="GO:0005975">
    <property type="term" value="P:carbohydrate metabolic process"/>
    <property type="evidence" value="ECO:0007669"/>
    <property type="project" value="InterPro"/>
</dbReference>
<dbReference type="GO" id="GO:0046167">
    <property type="term" value="P:glycerol-3-phosphate biosynthetic process"/>
    <property type="evidence" value="ECO:0007669"/>
    <property type="project" value="UniProtKB-UniRule"/>
</dbReference>
<dbReference type="GO" id="GO:0046168">
    <property type="term" value="P:glycerol-3-phosphate catabolic process"/>
    <property type="evidence" value="ECO:0007669"/>
    <property type="project" value="InterPro"/>
</dbReference>
<dbReference type="GO" id="GO:0006650">
    <property type="term" value="P:glycerophospholipid metabolic process"/>
    <property type="evidence" value="ECO:0007669"/>
    <property type="project" value="UniProtKB-UniRule"/>
</dbReference>
<dbReference type="GO" id="GO:0008654">
    <property type="term" value="P:phospholipid biosynthetic process"/>
    <property type="evidence" value="ECO:0007669"/>
    <property type="project" value="UniProtKB-KW"/>
</dbReference>
<dbReference type="FunFam" id="1.10.1040.10:FF:000001">
    <property type="entry name" value="Glycerol-3-phosphate dehydrogenase [NAD(P)+]"/>
    <property type="match status" value="1"/>
</dbReference>
<dbReference type="FunFam" id="3.40.50.720:FF:000019">
    <property type="entry name" value="Glycerol-3-phosphate dehydrogenase [NAD(P)+]"/>
    <property type="match status" value="1"/>
</dbReference>
<dbReference type="Gene3D" id="1.10.1040.10">
    <property type="entry name" value="N-(1-d-carboxylethyl)-l-norvaline Dehydrogenase, domain 2"/>
    <property type="match status" value="1"/>
</dbReference>
<dbReference type="Gene3D" id="3.40.50.720">
    <property type="entry name" value="NAD(P)-binding Rossmann-like Domain"/>
    <property type="match status" value="1"/>
</dbReference>
<dbReference type="HAMAP" id="MF_00394">
    <property type="entry name" value="NAD_Glyc3P_dehydrog"/>
    <property type="match status" value="1"/>
</dbReference>
<dbReference type="InterPro" id="IPR008927">
    <property type="entry name" value="6-PGluconate_DH-like_C_sf"/>
</dbReference>
<dbReference type="InterPro" id="IPR013328">
    <property type="entry name" value="6PGD_dom2"/>
</dbReference>
<dbReference type="InterPro" id="IPR006168">
    <property type="entry name" value="G3P_DH_NAD-dep"/>
</dbReference>
<dbReference type="InterPro" id="IPR006109">
    <property type="entry name" value="G3P_DH_NAD-dep_C"/>
</dbReference>
<dbReference type="InterPro" id="IPR011128">
    <property type="entry name" value="G3P_DH_NAD-dep_N"/>
</dbReference>
<dbReference type="InterPro" id="IPR036291">
    <property type="entry name" value="NAD(P)-bd_dom_sf"/>
</dbReference>
<dbReference type="NCBIfam" id="NF000940">
    <property type="entry name" value="PRK00094.1-2"/>
    <property type="match status" value="1"/>
</dbReference>
<dbReference type="NCBIfam" id="NF000941">
    <property type="entry name" value="PRK00094.1-3"/>
    <property type="match status" value="1"/>
</dbReference>
<dbReference type="NCBIfam" id="NF000942">
    <property type="entry name" value="PRK00094.1-4"/>
    <property type="match status" value="1"/>
</dbReference>
<dbReference type="PANTHER" id="PTHR11728">
    <property type="entry name" value="GLYCEROL-3-PHOSPHATE DEHYDROGENASE"/>
    <property type="match status" value="1"/>
</dbReference>
<dbReference type="PANTHER" id="PTHR11728:SF1">
    <property type="entry name" value="GLYCEROL-3-PHOSPHATE DEHYDROGENASE [NAD(+)] 2, CHLOROPLASTIC"/>
    <property type="match status" value="1"/>
</dbReference>
<dbReference type="Pfam" id="PF07479">
    <property type="entry name" value="NAD_Gly3P_dh_C"/>
    <property type="match status" value="1"/>
</dbReference>
<dbReference type="Pfam" id="PF01210">
    <property type="entry name" value="NAD_Gly3P_dh_N"/>
    <property type="match status" value="1"/>
</dbReference>
<dbReference type="PIRSF" id="PIRSF000114">
    <property type="entry name" value="Glycerol-3-P_dh"/>
    <property type="match status" value="1"/>
</dbReference>
<dbReference type="PRINTS" id="PR00077">
    <property type="entry name" value="GPDHDRGNASE"/>
</dbReference>
<dbReference type="SUPFAM" id="SSF48179">
    <property type="entry name" value="6-phosphogluconate dehydrogenase C-terminal domain-like"/>
    <property type="match status" value="1"/>
</dbReference>
<dbReference type="SUPFAM" id="SSF51735">
    <property type="entry name" value="NAD(P)-binding Rossmann-fold domains"/>
    <property type="match status" value="1"/>
</dbReference>
<dbReference type="PROSITE" id="PS00957">
    <property type="entry name" value="NAD_G3PDH"/>
    <property type="match status" value="1"/>
</dbReference>
<organism>
    <name type="scientific">Desulfitobacterium hafniense (strain Y51)</name>
    <dbReference type="NCBI Taxonomy" id="138119"/>
    <lineage>
        <taxon>Bacteria</taxon>
        <taxon>Bacillati</taxon>
        <taxon>Bacillota</taxon>
        <taxon>Clostridia</taxon>
        <taxon>Eubacteriales</taxon>
        <taxon>Desulfitobacteriaceae</taxon>
        <taxon>Desulfitobacterium</taxon>
    </lineage>
</organism>
<accession>Q24VA4</accession>
<sequence>MAKIAVYGAGSWGTALAVSMGKAGHEVALVGRNLSEMDLMEQRRENRPYLPGVVLPPTVRPTGDAGVLEEAEMLVLSVPSHSVRETAQKIRAYLQPGTIVVNTAKGLEEGSHKRLSQVLTEELPHHPIVVLSGPSHAEEVGKDMPTTVVVASQNSQAAEAVQDMLMTPKFRVYTNPDTIGVELGGAFKNIIALCAGFADGLGFGDNTKAALMTRGIAEITRLGAAMGGNPLTFAGLAGVGDLIVTCTSRHSRNHRAGVALGEGKPLEQVLKEVGMVVEGVRTTRVAYELSRQYEISMPITEQAYQVLFQGADPRAAVSALMMRGKKHEIEEVALIAMEQGSYQENGPDDHGE</sequence>
<reference key="1">
    <citation type="journal article" date="2006" name="J. Bacteriol.">
        <title>Complete genome sequence of the dehalorespiring bacterium Desulfitobacterium hafniense Y51 and comparison with Dehalococcoides ethenogenes 195.</title>
        <authorList>
            <person name="Nonaka H."/>
            <person name="Keresztes G."/>
            <person name="Shinoda Y."/>
            <person name="Ikenaga Y."/>
            <person name="Abe M."/>
            <person name="Naito K."/>
            <person name="Inatomi K."/>
            <person name="Furukawa K."/>
            <person name="Inui M."/>
            <person name="Yukawa H."/>
        </authorList>
    </citation>
    <scope>NUCLEOTIDE SEQUENCE [LARGE SCALE GENOMIC DNA]</scope>
    <source>
        <strain>Y51</strain>
    </source>
</reference>
<feature type="chain" id="PRO_0000255306" description="Glycerol-3-phosphate dehydrogenase [NAD(P)+]">
    <location>
        <begin position="1"/>
        <end position="352"/>
    </location>
</feature>
<feature type="active site" description="Proton acceptor" evidence="1">
    <location>
        <position position="188"/>
    </location>
</feature>
<feature type="binding site" evidence="1">
    <location>
        <position position="11"/>
    </location>
    <ligand>
        <name>NADPH</name>
        <dbReference type="ChEBI" id="CHEBI:57783"/>
    </ligand>
</feature>
<feature type="binding site" evidence="1">
    <location>
        <position position="12"/>
    </location>
    <ligand>
        <name>NADPH</name>
        <dbReference type="ChEBI" id="CHEBI:57783"/>
    </ligand>
</feature>
<feature type="binding site" evidence="1">
    <location>
        <position position="32"/>
    </location>
    <ligand>
        <name>NADPH</name>
        <dbReference type="ChEBI" id="CHEBI:57783"/>
    </ligand>
</feature>
<feature type="binding site" evidence="1">
    <location>
        <position position="105"/>
    </location>
    <ligand>
        <name>NADPH</name>
        <dbReference type="ChEBI" id="CHEBI:57783"/>
    </ligand>
</feature>
<feature type="binding site" evidence="1">
    <location>
        <position position="105"/>
    </location>
    <ligand>
        <name>sn-glycerol 3-phosphate</name>
        <dbReference type="ChEBI" id="CHEBI:57597"/>
    </ligand>
</feature>
<feature type="binding site" evidence="1">
    <location>
        <position position="133"/>
    </location>
    <ligand>
        <name>sn-glycerol 3-phosphate</name>
        <dbReference type="ChEBI" id="CHEBI:57597"/>
    </ligand>
</feature>
<feature type="binding site" evidence="1">
    <location>
        <position position="135"/>
    </location>
    <ligand>
        <name>sn-glycerol 3-phosphate</name>
        <dbReference type="ChEBI" id="CHEBI:57597"/>
    </ligand>
</feature>
<feature type="binding site" evidence="1">
    <location>
        <position position="137"/>
    </location>
    <ligand>
        <name>NADPH</name>
        <dbReference type="ChEBI" id="CHEBI:57783"/>
    </ligand>
</feature>
<feature type="binding site" evidence="1">
    <location>
        <position position="188"/>
    </location>
    <ligand>
        <name>sn-glycerol 3-phosphate</name>
        <dbReference type="ChEBI" id="CHEBI:57597"/>
    </ligand>
</feature>
<feature type="binding site" evidence="1">
    <location>
        <position position="241"/>
    </location>
    <ligand>
        <name>sn-glycerol 3-phosphate</name>
        <dbReference type="ChEBI" id="CHEBI:57597"/>
    </ligand>
</feature>
<feature type="binding site" evidence="1">
    <location>
        <position position="251"/>
    </location>
    <ligand>
        <name>sn-glycerol 3-phosphate</name>
        <dbReference type="ChEBI" id="CHEBI:57597"/>
    </ligand>
</feature>
<feature type="binding site" evidence="1">
    <location>
        <position position="252"/>
    </location>
    <ligand>
        <name>NADPH</name>
        <dbReference type="ChEBI" id="CHEBI:57783"/>
    </ligand>
</feature>
<feature type="binding site" evidence="1">
    <location>
        <position position="252"/>
    </location>
    <ligand>
        <name>sn-glycerol 3-phosphate</name>
        <dbReference type="ChEBI" id="CHEBI:57597"/>
    </ligand>
</feature>
<feature type="binding site" evidence="1">
    <location>
        <position position="253"/>
    </location>
    <ligand>
        <name>sn-glycerol 3-phosphate</name>
        <dbReference type="ChEBI" id="CHEBI:57597"/>
    </ligand>
</feature>
<feature type="binding site" evidence="1">
    <location>
        <position position="276"/>
    </location>
    <ligand>
        <name>NADPH</name>
        <dbReference type="ChEBI" id="CHEBI:57783"/>
    </ligand>
</feature>
<feature type="binding site" evidence="1">
    <location>
        <position position="278"/>
    </location>
    <ligand>
        <name>NADPH</name>
        <dbReference type="ChEBI" id="CHEBI:57783"/>
    </ligand>
</feature>
<gene>
    <name evidence="1" type="primary">gpsA</name>
    <name type="ordered locus">DSY2249</name>
</gene>
<evidence type="ECO:0000255" key="1">
    <source>
        <dbReference type="HAMAP-Rule" id="MF_00394"/>
    </source>
</evidence>
<keyword id="KW-0963">Cytoplasm</keyword>
<keyword id="KW-0444">Lipid biosynthesis</keyword>
<keyword id="KW-0443">Lipid metabolism</keyword>
<keyword id="KW-0520">NAD</keyword>
<keyword id="KW-0521">NADP</keyword>
<keyword id="KW-0547">Nucleotide-binding</keyword>
<keyword id="KW-0560">Oxidoreductase</keyword>
<keyword id="KW-0594">Phospholipid biosynthesis</keyword>
<keyword id="KW-1208">Phospholipid metabolism</keyword>
<keyword id="KW-1185">Reference proteome</keyword>
<name>GPDA_DESHY</name>
<protein>
    <recommendedName>
        <fullName evidence="1">Glycerol-3-phosphate dehydrogenase [NAD(P)+]</fullName>
        <ecNumber evidence="1">1.1.1.94</ecNumber>
    </recommendedName>
    <alternativeName>
        <fullName evidence="1">NAD(P)(+)-dependent glycerol-3-phosphate dehydrogenase</fullName>
    </alternativeName>
    <alternativeName>
        <fullName evidence="1">NAD(P)H-dependent dihydroxyacetone-phosphate reductase</fullName>
    </alternativeName>
</protein>
<comment type="function">
    <text evidence="1">Catalyzes the reduction of the glycolytic intermediate dihydroxyacetone phosphate (DHAP) to sn-glycerol 3-phosphate (G3P), the key precursor for phospholipid synthesis.</text>
</comment>
<comment type="catalytic activity">
    <reaction evidence="1">
        <text>sn-glycerol 3-phosphate + NAD(+) = dihydroxyacetone phosphate + NADH + H(+)</text>
        <dbReference type="Rhea" id="RHEA:11092"/>
        <dbReference type="ChEBI" id="CHEBI:15378"/>
        <dbReference type="ChEBI" id="CHEBI:57540"/>
        <dbReference type="ChEBI" id="CHEBI:57597"/>
        <dbReference type="ChEBI" id="CHEBI:57642"/>
        <dbReference type="ChEBI" id="CHEBI:57945"/>
        <dbReference type="EC" id="1.1.1.94"/>
    </reaction>
    <physiologicalReaction direction="right-to-left" evidence="1">
        <dbReference type="Rhea" id="RHEA:11094"/>
    </physiologicalReaction>
</comment>
<comment type="catalytic activity">
    <reaction evidence="1">
        <text>sn-glycerol 3-phosphate + NADP(+) = dihydroxyacetone phosphate + NADPH + H(+)</text>
        <dbReference type="Rhea" id="RHEA:11096"/>
        <dbReference type="ChEBI" id="CHEBI:15378"/>
        <dbReference type="ChEBI" id="CHEBI:57597"/>
        <dbReference type="ChEBI" id="CHEBI:57642"/>
        <dbReference type="ChEBI" id="CHEBI:57783"/>
        <dbReference type="ChEBI" id="CHEBI:58349"/>
        <dbReference type="EC" id="1.1.1.94"/>
    </reaction>
    <physiologicalReaction direction="right-to-left" evidence="1">
        <dbReference type="Rhea" id="RHEA:11098"/>
    </physiologicalReaction>
</comment>
<comment type="pathway">
    <text evidence="1">Membrane lipid metabolism; glycerophospholipid metabolism.</text>
</comment>
<comment type="subcellular location">
    <subcellularLocation>
        <location evidence="1">Cytoplasm</location>
    </subcellularLocation>
</comment>
<comment type="similarity">
    <text evidence="1">Belongs to the NAD-dependent glycerol-3-phosphate dehydrogenase family.</text>
</comment>